<sequence>MDFFKKEILDWSIYLFLHYITRLCSNSSNSSTSHIIQEYNLVRKYEKVDKTIVDFLSRWPNLFHILEYGENILHIYFIDAANTNIMIFFLDRVLNINKNRGSFIHNLGLSSINIKEYVYQLVNNDHLDNSIRLMLENGRRTRHFLSYILDTVNIYISILINHRFYIDAEDSYGCTLLHRCIYNYKKSESESYNELIKILLNNGSDVDKKDTYGNTPFILLCKHDIDNAELFEICLENANIDSVDFNGYTPLHYVSCRNKYDFVKLLISKGANVNARNRFGTTPFYCGIIHGISLIKLYLESDTELEIDNEHIVRHLIIFDAVESLDYLLSRGVIDINYRTIYNETSIYDAVSYNAYNTLVYLLNRNGDFETITTSGCTCISEAVANNNKIIMDILLSKRPSLKIMIPSMIAITKHKQHNADLLKMCIKYTACMTDYDTLIDVQSLHQYKWYILKCFDEIDIMKRCYIKNKTVFQLVFCIKDINTLMRYGRHPSFVKCNILDVYGSCVRNIIASIRYRQRLISLLSKKLDAGDKWSCFPNEIKYKILENFNDNELTTYLKIL</sequence>
<keyword id="KW-0040">ANK repeat</keyword>
<keyword id="KW-1185">Reference proteome</keyword>
<keyword id="KW-0677">Repeat</keyword>
<organismHost>
    <name type="scientific">Cynomys gunnisoni</name>
    <name type="common">Gunnison's prairie dog</name>
    <name type="synonym">Spermophilus gunnisoni</name>
    <dbReference type="NCBI Taxonomy" id="45479"/>
</organismHost>
<organismHost>
    <name type="scientific">Cynomys leucurus</name>
    <name type="common">White-tailed prairie dog</name>
    <dbReference type="NCBI Taxonomy" id="99825"/>
</organismHost>
<organismHost>
    <name type="scientific">Cynomys ludovicianus</name>
    <name type="common">Black-tailed prairie dog</name>
    <dbReference type="NCBI Taxonomy" id="45480"/>
</organismHost>
<organismHost>
    <name type="scientific">Cynomys mexicanus</name>
    <name type="common">Mexican prairie dog</name>
    <dbReference type="NCBI Taxonomy" id="99826"/>
</organismHost>
<organismHost>
    <name type="scientific">Cynomys parvidens</name>
    <name type="common">Utah prairie dog</name>
    <dbReference type="NCBI Taxonomy" id="99827"/>
</organismHost>
<organismHost>
    <name type="scientific">Gliridae</name>
    <name type="common">dormice</name>
    <dbReference type="NCBI Taxonomy" id="30650"/>
</organismHost>
<organismHost>
    <name type="scientific">Heliosciurus ruwenzorii</name>
    <name type="common">Ruwenzori sun squirrel</name>
    <dbReference type="NCBI Taxonomy" id="226685"/>
</organismHost>
<organismHost>
    <name type="scientific">Homo sapiens</name>
    <name type="common">Human</name>
    <dbReference type="NCBI Taxonomy" id="9606"/>
</organismHost>
<organismHost>
    <name type="scientific">Mus musculus</name>
    <name type="common">Mouse</name>
    <dbReference type="NCBI Taxonomy" id="10090"/>
</organismHost>
<feature type="chain" id="PRO_0000457613" description="Ankyrin repeat protein OPG189">
    <location>
        <begin position="1"/>
        <end position="561"/>
    </location>
</feature>
<feature type="repeat" description="ANK 1" evidence="2">
    <location>
        <begin position="68"/>
        <end position="98"/>
    </location>
</feature>
<feature type="repeat" description="ANK 2" evidence="2">
    <location>
        <begin position="172"/>
        <end position="208"/>
    </location>
</feature>
<feature type="repeat" description="ANK 3" evidence="2">
    <location>
        <begin position="212"/>
        <end position="242"/>
    </location>
</feature>
<feature type="repeat" description="ANK 4" evidence="2">
    <location>
        <begin position="246"/>
        <end position="275"/>
    </location>
</feature>
<feature type="repeat" description="ANK 5" evidence="2">
    <location>
        <begin position="279"/>
        <end position="307"/>
    </location>
</feature>
<feature type="repeat" description="ANK 6" evidence="2">
    <location>
        <begin position="342"/>
        <end position="371"/>
    </location>
</feature>
<feature type="repeat" description="ANK 7" evidence="2">
    <location>
        <begin position="375"/>
        <end position="404"/>
    </location>
</feature>
<name>PG189_MONPV</name>
<protein>
    <recommendedName>
        <fullName>Ankyrin repeat protein OPG189</fullName>
    </recommendedName>
</protein>
<proteinExistence type="inferred from homology"/>
<gene>
    <name type="primary">OPG189</name>
    <name type="ORF">MPXVgp166</name>
</gene>
<comment type="function">
    <text evidence="1">Contributes to viral release without involving rearrangement of host actin.</text>
</comment>
<comment type="similarity">
    <text evidence="3">Belongs to the orthopoxvirus OPG189 protein family.</text>
</comment>
<organism>
    <name type="scientific">Monkeypox virus</name>
    <dbReference type="NCBI Taxonomy" id="10244"/>
    <lineage>
        <taxon>Viruses</taxon>
        <taxon>Varidnaviria</taxon>
        <taxon>Bamfordvirae</taxon>
        <taxon>Nucleocytoviricota</taxon>
        <taxon>Pokkesviricetes</taxon>
        <taxon>Chitovirales</taxon>
        <taxon>Poxviridae</taxon>
        <taxon>Chordopoxvirinae</taxon>
        <taxon>Orthopoxvirus</taxon>
    </lineage>
</organism>
<reference key="1">
    <citation type="journal article" date="2022" name="J. Infect. Dis.">
        <title>Exportation of Monkeypox virus from the African continent.</title>
        <authorList>
            <person name="Mauldin M.R."/>
            <person name="McCollum A.M."/>
            <person name="Nakazawa Y.J."/>
            <person name="Mandra A."/>
            <person name="Whitehouse E.R."/>
            <person name="Davidson W."/>
            <person name="Zhao H."/>
            <person name="Gao J."/>
            <person name="Li Y."/>
            <person name="Doty J."/>
            <person name="Yinka-Ogunleye A."/>
            <person name="Akinpelu A."/>
            <person name="Aruna O."/>
            <person name="Naidoo D."/>
            <person name="Lewandowski K."/>
            <person name="Afrough B."/>
            <person name="Graham V."/>
            <person name="Aarons E."/>
            <person name="Hewson R."/>
            <person name="Vipond R."/>
            <person name="Dunning J."/>
            <person name="Chand M."/>
            <person name="Brown C."/>
            <person name="Cohen-Gihon I."/>
            <person name="Erez N."/>
            <person name="Shifman O."/>
            <person name="Israeli O."/>
            <person name="Sharon M."/>
            <person name="Schwartz E."/>
            <person name="Beth-Din A."/>
            <person name="Zvi A."/>
            <person name="Mak T.M."/>
            <person name="Ng Y.K."/>
            <person name="Cui L."/>
            <person name="Lin R.T.P."/>
            <person name="Olson V.A."/>
            <person name="Brooks T."/>
            <person name="Paran N."/>
            <person name="Ihekweazu C."/>
            <person name="Reynolds M.G."/>
        </authorList>
    </citation>
    <scope>NUCLEOTIDE SEQUENCE [LARGE SCALE GENOMIC DNA]</scope>
    <source>
        <strain>MPXV-M5312_HM12_Rivers</strain>
    </source>
</reference>
<accession>A0A7H0DNF1</accession>
<dbReference type="EMBL" id="MT903340">
    <property type="protein sequence ID" value="QNP13034.1"/>
    <property type="molecule type" value="Genomic_DNA"/>
</dbReference>
<dbReference type="RefSeq" id="YP_010377161.1">
    <property type="nucleotide sequence ID" value="NC_063383.1"/>
</dbReference>
<dbReference type="SMR" id="A0A7H0DNF1"/>
<dbReference type="GeneID" id="72551575"/>
<dbReference type="Proteomes" id="UP000516359">
    <property type="component" value="Genome"/>
</dbReference>
<dbReference type="Gene3D" id="1.25.40.20">
    <property type="entry name" value="Ankyrin repeat-containing domain"/>
    <property type="match status" value="2"/>
</dbReference>
<dbReference type="InterPro" id="IPR002110">
    <property type="entry name" value="Ankyrin_rpt"/>
</dbReference>
<dbReference type="InterPro" id="IPR036770">
    <property type="entry name" value="Ankyrin_rpt-contain_sf"/>
</dbReference>
<dbReference type="InterPro" id="IPR018272">
    <property type="entry name" value="PRANC_domain"/>
</dbReference>
<dbReference type="PANTHER" id="PTHR24198">
    <property type="entry name" value="ANKYRIN REPEAT AND PROTEIN KINASE DOMAIN-CONTAINING PROTEIN"/>
    <property type="match status" value="1"/>
</dbReference>
<dbReference type="PANTHER" id="PTHR24198:SF165">
    <property type="entry name" value="ANKYRIN REPEAT-CONTAINING PROTEIN-RELATED"/>
    <property type="match status" value="1"/>
</dbReference>
<dbReference type="Pfam" id="PF12796">
    <property type="entry name" value="Ank_2"/>
    <property type="match status" value="1"/>
</dbReference>
<dbReference type="Pfam" id="PF09372">
    <property type="entry name" value="PRANC"/>
    <property type="match status" value="1"/>
</dbReference>
<dbReference type="SMART" id="SM00248">
    <property type="entry name" value="ANK"/>
    <property type="match status" value="7"/>
</dbReference>
<dbReference type="SUPFAM" id="SSF48403">
    <property type="entry name" value="Ankyrin repeat"/>
    <property type="match status" value="1"/>
</dbReference>
<dbReference type="PROSITE" id="PS50297">
    <property type="entry name" value="ANK_REP_REGION"/>
    <property type="match status" value="1"/>
</dbReference>
<dbReference type="PROSITE" id="PS50088">
    <property type="entry name" value="ANK_REPEAT"/>
    <property type="match status" value="1"/>
</dbReference>
<evidence type="ECO:0000250" key="1">
    <source>
        <dbReference type="UniProtKB" id="P24769"/>
    </source>
</evidence>
<evidence type="ECO:0000255" key="2"/>
<evidence type="ECO:0000305" key="3"/>